<accession>Q3K1Y2</accession>
<feature type="chain" id="PRO_0000228587" description="Ribonuclease 3">
    <location>
        <begin position="1"/>
        <end position="228"/>
    </location>
</feature>
<feature type="domain" description="RNase III" evidence="1">
    <location>
        <begin position="5"/>
        <end position="134"/>
    </location>
</feature>
<feature type="domain" description="DRBM" evidence="1">
    <location>
        <begin position="160"/>
        <end position="228"/>
    </location>
</feature>
<feature type="active site" evidence="1">
    <location>
        <position position="51"/>
    </location>
</feature>
<feature type="active site" evidence="1">
    <location>
        <position position="123"/>
    </location>
</feature>
<feature type="binding site" evidence="1">
    <location>
        <position position="47"/>
    </location>
    <ligand>
        <name>Mg(2+)</name>
        <dbReference type="ChEBI" id="CHEBI:18420"/>
    </ligand>
</feature>
<feature type="binding site" evidence="1">
    <location>
        <position position="120"/>
    </location>
    <ligand>
        <name>Mg(2+)</name>
        <dbReference type="ChEBI" id="CHEBI:18420"/>
    </ligand>
</feature>
<feature type="binding site" evidence="1">
    <location>
        <position position="123"/>
    </location>
    <ligand>
        <name>Mg(2+)</name>
        <dbReference type="ChEBI" id="CHEBI:18420"/>
    </ligand>
</feature>
<evidence type="ECO:0000255" key="1">
    <source>
        <dbReference type="HAMAP-Rule" id="MF_00104"/>
    </source>
</evidence>
<dbReference type="EC" id="3.1.26.3" evidence="1"/>
<dbReference type="EMBL" id="CP000114">
    <property type="protein sequence ID" value="ABA46055.1"/>
    <property type="molecule type" value="Genomic_DNA"/>
</dbReference>
<dbReference type="RefSeq" id="WP_000661526.1">
    <property type="nucleotide sequence ID" value="NC_007432.1"/>
</dbReference>
<dbReference type="SMR" id="Q3K1Y2"/>
<dbReference type="GeneID" id="66885626"/>
<dbReference type="KEGG" id="sak:SAK_0849"/>
<dbReference type="HOGENOM" id="CLU_000907_1_3_9"/>
<dbReference type="GO" id="GO:0005737">
    <property type="term" value="C:cytoplasm"/>
    <property type="evidence" value="ECO:0007669"/>
    <property type="project" value="UniProtKB-SubCell"/>
</dbReference>
<dbReference type="GO" id="GO:0003725">
    <property type="term" value="F:double-stranded RNA binding"/>
    <property type="evidence" value="ECO:0007669"/>
    <property type="project" value="TreeGrafter"/>
</dbReference>
<dbReference type="GO" id="GO:0046872">
    <property type="term" value="F:metal ion binding"/>
    <property type="evidence" value="ECO:0007669"/>
    <property type="project" value="UniProtKB-KW"/>
</dbReference>
<dbReference type="GO" id="GO:0004525">
    <property type="term" value="F:ribonuclease III activity"/>
    <property type="evidence" value="ECO:0007669"/>
    <property type="project" value="UniProtKB-UniRule"/>
</dbReference>
<dbReference type="GO" id="GO:0019843">
    <property type="term" value="F:rRNA binding"/>
    <property type="evidence" value="ECO:0007669"/>
    <property type="project" value="UniProtKB-KW"/>
</dbReference>
<dbReference type="GO" id="GO:0006397">
    <property type="term" value="P:mRNA processing"/>
    <property type="evidence" value="ECO:0007669"/>
    <property type="project" value="UniProtKB-UniRule"/>
</dbReference>
<dbReference type="GO" id="GO:0010468">
    <property type="term" value="P:regulation of gene expression"/>
    <property type="evidence" value="ECO:0007669"/>
    <property type="project" value="TreeGrafter"/>
</dbReference>
<dbReference type="GO" id="GO:0006364">
    <property type="term" value="P:rRNA processing"/>
    <property type="evidence" value="ECO:0007669"/>
    <property type="project" value="UniProtKB-UniRule"/>
</dbReference>
<dbReference type="GO" id="GO:0008033">
    <property type="term" value="P:tRNA processing"/>
    <property type="evidence" value="ECO:0007669"/>
    <property type="project" value="UniProtKB-KW"/>
</dbReference>
<dbReference type="CDD" id="cd10845">
    <property type="entry name" value="DSRM_RNAse_III_family"/>
    <property type="match status" value="1"/>
</dbReference>
<dbReference type="CDD" id="cd00593">
    <property type="entry name" value="RIBOc"/>
    <property type="match status" value="1"/>
</dbReference>
<dbReference type="FunFam" id="1.10.1520.10:FF:000001">
    <property type="entry name" value="Ribonuclease 3"/>
    <property type="match status" value="1"/>
</dbReference>
<dbReference type="FunFam" id="3.30.160.20:FF:000003">
    <property type="entry name" value="Ribonuclease 3"/>
    <property type="match status" value="1"/>
</dbReference>
<dbReference type="Gene3D" id="3.30.160.20">
    <property type="match status" value="1"/>
</dbReference>
<dbReference type="Gene3D" id="1.10.1520.10">
    <property type="entry name" value="Ribonuclease III domain"/>
    <property type="match status" value="1"/>
</dbReference>
<dbReference type="HAMAP" id="MF_00104">
    <property type="entry name" value="RNase_III"/>
    <property type="match status" value="1"/>
</dbReference>
<dbReference type="InterPro" id="IPR014720">
    <property type="entry name" value="dsRBD_dom"/>
</dbReference>
<dbReference type="InterPro" id="IPR011907">
    <property type="entry name" value="RNase_III"/>
</dbReference>
<dbReference type="InterPro" id="IPR000999">
    <property type="entry name" value="RNase_III_dom"/>
</dbReference>
<dbReference type="InterPro" id="IPR036389">
    <property type="entry name" value="RNase_III_sf"/>
</dbReference>
<dbReference type="NCBIfam" id="TIGR02191">
    <property type="entry name" value="RNaseIII"/>
    <property type="match status" value="1"/>
</dbReference>
<dbReference type="PANTHER" id="PTHR11207:SF0">
    <property type="entry name" value="RIBONUCLEASE 3"/>
    <property type="match status" value="1"/>
</dbReference>
<dbReference type="PANTHER" id="PTHR11207">
    <property type="entry name" value="RIBONUCLEASE III"/>
    <property type="match status" value="1"/>
</dbReference>
<dbReference type="Pfam" id="PF00035">
    <property type="entry name" value="dsrm"/>
    <property type="match status" value="1"/>
</dbReference>
<dbReference type="Pfam" id="PF14622">
    <property type="entry name" value="Ribonucleas_3_3"/>
    <property type="match status" value="1"/>
</dbReference>
<dbReference type="SMART" id="SM00358">
    <property type="entry name" value="DSRM"/>
    <property type="match status" value="1"/>
</dbReference>
<dbReference type="SMART" id="SM00535">
    <property type="entry name" value="RIBOc"/>
    <property type="match status" value="1"/>
</dbReference>
<dbReference type="SUPFAM" id="SSF54768">
    <property type="entry name" value="dsRNA-binding domain-like"/>
    <property type="match status" value="1"/>
</dbReference>
<dbReference type="SUPFAM" id="SSF69065">
    <property type="entry name" value="RNase III domain-like"/>
    <property type="match status" value="1"/>
</dbReference>
<dbReference type="PROSITE" id="PS50137">
    <property type="entry name" value="DS_RBD"/>
    <property type="match status" value="1"/>
</dbReference>
<dbReference type="PROSITE" id="PS00517">
    <property type="entry name" value="RNASE_3_1"/>
    <property type="match status" value="1"/>
</dbReference>
<dbReference type="PROSITE" id="PS50142">
    <property type="entry name" value="RNASE_3_2"/>
    <property type="match status" value="1"/>
</dbReference>
<name>RNC_STRA1</name>
<keyword id="KW-0963">Cytoplasm</keyword>
<keyword id="KW-0255">Endonuclease</keyword>
<keyword id="KW-0378">Hydrolase</keyword>
<keyword id="KW-0460">Magnesium</keyword>
<keyword id="KW-0479">Metal-binding</keyword>
<keyword id="KW-0507">mRNA processing</keyword>
<keyword id="KW-0540">Nuclease</keyword>
<keyword id="KW-0694">RNA-binding</keyword>
<keyword id="KW-0698">rRNA processing</keyword>
<keyword id="KW-0699">rRNA-binding</keyword>
<keyword id="KW-0819">tRNA processing</keyword>
<comment type="function">
    <text evidence="1">Digests double-stranded RNA. Involved in the processing of primary rRNA transcript to yield the immediate precursors to the large and small rRNAs (23S and 16S). Processes some mRNAs, and tRNAs when they are encoded in the rRNA operon. Processes pre-crRNA and tracrRNA of type II CRISPR loci if present in the organism.</text>
</comment>
<comment type="catalytic activity">
    <reaction evidence="1">
        <text>Endonucleolytic cleavage to 5'-phosphomonoester.</text>
        <dbReference type="EC" id="3.1.26.3"/>
    </reaction>
</comment>
<comment type="cofactor">
    <cofactor evidence="1">
        <name>Mg(2+)</name>
        <dbReference type="ChEBI" id="CHEBI:18420"/>
    </cofactor>
</comment>
<comment type="subunit">
    <text evidence="1">Homodimer.</text>
</comment>
<comment type="subcellular location">
    <subcellularLocation>
        <location evidence="1">Cytoplasm</location>
    </subcellularLocation>
</comment>
<comment type="similarity">
    <text evidence="1">Belongs to the ribonuclease III family.</text>
</comment>
<reference key="1">
    <citation type="journal article" date="2005" name="Proc. Natl. Acad. Sci. U.S.A.">
        <title>Genome analysis of multiple pathogenic isolates of Streptococcus agalactiae: implications for the microbial 'pan-genome'.</title>
        <authorList>
            <person name="Tettelin H."/>
            <person name="Masignani V."/>
            <person name="Cieslewicz M.J."/>
            <person name="Donati C."/>
            <person name="Medini D."/>
            <person name="Ward N.L."/>
            <person name="Angiuoli S.V."/>
            <person name="Crabtree J."/>
            <person name="Jones A.L."/>
            <person name="Durkin A.S."/>
            <person name="DeBoy R.T."/>
            <person name="Davidsen T.M."/>
            <person name="Mora M."/>
            <person name="Scarselli M."/>
            <person name="Margarit y Ros I."/>
            <person name="Peterson J.D."/>
            <person name="Hauser C.R."/>
            <person name="Sundaram J.P."/>
            <person name="Nelson W.C."/>
            <person name="Madupu R."/>
            <person name="Brinkac L.M."/>
            <person name="Dodson R.J."/>
            <person name="Rosovitz M.J."/>
            <person name="Sullivan S.A."/>
            <person name="Daugherty S.C."/>
            <person name="Haft D.H."/>
            <person name="Selengut J."/>
            <person name="Gwinn M.L."/>
            <person name="Zhou L."/>
            <person name="Zafar N."/>
            <person name="Khouri H."/>
            <person name="Radune D."/>
            <person name="Dimitrov G."/>
            <person name="Watkins K."/>
            <person name="O'Connor K.J."/>
            <person name="Smith S."/>
            <person name="Utterback T.R."/>
            <person name="White O."/>
            <person name="Rubens C.E."/>
            <person name="Grandi G."/>
            <person name="Madoff L.C."/>
            <person name="Kasper D.L."/>
            <person name="Telford J.L."/>
            <person name="Wessels M.R."/>
            <person name="Rappuoli R."/>
            <person name="Fraser C.M."/>
        </authorList>
    </citation>
    <scope>NUCLEOTIDE SEQUENCE [LARGE SCALE GENOMIC DNA]</scope>
    <source>
        <strain>ATCC 27591 / A909 / CDC SS700</strain>
    </source>
</reference>
<gene>
    <name evidence="1" type="primary">rnc</name>
    <name type="ordered locus">SAK_0849</name>
</gene>
<sequence>MKELRSKLEKDYGIVFANQELLDTAFTHTSYANEHRLLNISHNERLEFLGDAVLQLLISQYLFTKYPQKAEGDLSKLRSMIVREESLAGFSRLCGFDHYIKLGKGEEKSGGRNRDTILGDLFEAFLGALLLDKGVEVVHAFVNKVMIPHVEKGTYERVKDYKTSLQELLQSHGDVKIDYQVTNESGPAHAKEFEVTVSVNQENLSQGIGRSKKAAEQDAAKNALATLQ</sequence>
<protein>
    <recommendedName>
        <fullName evidence="1">Ribonuclease 3</fullName>
        <ecNumber evidence="1">3.1.26.3</ecNumber>
    </recommendedName>
    <alternativeName>
        <fullName evidence="1">Ribonuclease III</fullName>
        <shortName evidence="1">RNase III</shortName>
    </alternativeName>
</protein>
<organism>
    <name type="scientific">Streptococcus agalactiae serotype Ia (strain ATCC 27591 / A909 / CDC SS700)</name>
    <dbReference type="NCBI Taxonomy" id="205921"/>
    <lineage>
        <taxon>Bacteria</taxon>
        <taxon>Bacillati</taxon>
        <taxon>Bacillota</taxon>
        <taxon>Bacilli</taxon>
        <taxon>Lactobacillales</taxon>
        <taxon>Streptococcaceae</taxon>
        <taxon>Streptococcus</taxon>
    </lineage>
</organism>
<proteinExistence type="inferred from homology"/>